<accession>Q09892</accession>
<feature type="chain" id="PRO_0000186342" description="Mitogen-activated protein kinase sty1">
    <location>
        <begin position="1"/>
        <end position="349"/>
    </location>
</feature>
<feature type="domain" description="Protein kinase" evidence="4">
    <location>
        <begin position="20"/>
        <end position="299"/>
    </location>
</feature>
<feature type="short sequence motif" description="TXY">
    <location>
        <begin position="171"/>
        <end position="173"/>
    </location>
</feature>
<feature type="short sequence motif" description="TXY">
    <location>
        <begin position="176"/>
        <end position="178"/>
    </location>
</feature>
<feature type="active site" description="Proton acceptor" evidence="4 5">
    <location>
        <position position="141"/>
    </location>
</feature>
<feature type="binding site" evidence="4">
    <location>
        <begin position="26"/>
        <end position="34"/>
    </location>
    <ligand>
        <name>ATP</name>
        <dbReference type="ChEBI" id="CHEBI:30616"/>
    </ligand>
</feature>
<feature type="binding site" evidence="4">
    <location>
        <position position="49"/>
    </location>
    <ligand>
        <name>ATP</name>
        <dbReference type="ChEBI" id="CHEBI:30616"/>
    </ligand>
</feature>
<feature type="modified residue" description="Phosphothreonine" evidence="19">
    <location>
        <position position="171"/>
    </location>
</feature>
<feature type="modified residue" description="Phosphotyrosine" evidence="19">
    <location>
        <position position="173"/>
    </location>
</feature>
<feature type="modified residue" description="Phosphoserine" evidence="19">
    <location>
        <position position="175"/>
    </location>
</feature>
<feature type="modified residue" description="Phosphothreonine" evidence="19">
    <location>
        <position position="176"/>
    </location>
</feature>
<proteinExistence type="evidence at protein level"/>
<evidence type="ECO:0000250" key="1"/>
<evidence type="ECO:0000250" key="2">
    <source>
        <dbReference type="UniProtKB" id="P32485"/>
    </source>
</evidence>
<evidence type="ECO:0000250" key="3">
    <source>
        <dbReference type="UniProtKB" id="Q16539"/>
    </source>
</evidence>
<evidence type="ECO:0000255" key="4">
    <source>
        <dbReference type="PROSITE-ProRule" id="PRU00159"/>
    </source>
</evidence>
<evidence type="ECO:0000255" key="5">
    <source>
        <dbReference type="PROSITE-ProRule" id="PRU10027"/>
    </source>
</evidence>
<evidence type="ECO:0000269" key="6">
    <source>
    </source>
</evidence>
<evidence type="ECO:0000269" key="7">
    <source>
    </source>
</evidence>
<evidence type="ECO:0000269" key="8">
    <source>
    </source>
</evidence>
<evidence type="ECO:0000269" key="9">
    <source>
    </source>
</evidence>
<evidence type="ECO:0000269" key="10">
    <source>
    </source>
</evidence>
<evidence type="ECO:0000269" key="11">
    <source>
    </source>
</evidence>
<evidence type="ECO:0000269" key="12">
    <source>
    </source>
</evidence>
<evidence type="ECO:0000269" key="13">
    <source>
    </source>
</evidence>
<evidence type="ECO:0000269" key="14">
    <source>
    </source>
</evidence>
<evidence type="ECO:0000269" key="15">
    <source>
    </source>
</evidence>
<evidence type="ECO:0000269" key="16">
    <source>
    </source>
</evidence>
<evidence type="ECO:0000269" key="17">
    <source>
    </source>
</evidence>
<evidence type="ECO:0000269" key="18">
    <source>
    </source>
</evidence>
<evidence type="ECO:0000269" key="19">
    <source>
    </source>
</evidence>
<evidence type="ECO:0000269" key="20">
    <source>
    </source>
</evidence>
<evidence type="ECO:0000269" key="21">
    <source>
    </source>
</evidence>
<evidence type="ECO:0000269" key="22">
    <source>
    </source>
</evidence>
<evidence type="ECO:0000269" key="23">
    <source>
    </source>
</evidence>
<evidence type="ECO:0000269" key="24">
    <source>
    </source>
</evidence>
<evidence type="ECO:0000269" key="25">
    <source>
    </source>
</evidence>
<evidence type="ECO:0000269" key="26">
    <source>
    </source>
</evidence>
<evidence type="ECO:0000269" key="27">
    <source>
    </source>
</evidence>
<evidence type="ECO:0000269" key="28">
    <source>
    </source>
</evidence>
<sequence>MAEFIRTQIFGTCFEITTRYSDLQPIGMGAFGLVCSAKDQLTGMNVAVKKIMKPFSTPVLAKRTYRELKLLKHLRHENIISLSDIFISPFEDIYFVTELLGTDLHRLLTSRPLETQFIQYFLYQILRGLKFVHSAGVIHRDLKPSNILINENCDLKICDFGLARIQDPQMTGYVSTRYYRAPEIMLTWQKYNVEVDIWSAGCIFAEMIEGKPLFPGRDHVNQFSIITELLGTPPMEVIETICSKNTLRFVQSLPQKEKVPFAEKFKNADPDAIDLLEKMLVFDPRKRISAADALAHNYLAPYHDPTDEPVADEVFDWSFQDNDLPVETWKVMMYSEVLSFHNMDNELQS</sequence>
<comment type="function">
    <text evidence="6 8 10 11 12 13 14 16 17 18 21 22 23 25 27 28">Proline-directed serine/threonine-protein kinase involved in a signal transduction pathway that is activated by changes in the osmolarity of the extracellular environment. Controls osmotic regulation of transcription of target genes. Involved in osmoregulation and stress response pathways leading to an efficient start of sexual differentiation. Supports translation initiation and facilitates adaptation to environmental stress in part through reducing eIF2-alpha phosphorylation. Links the cell-cycle G2/M control with changes in the extracellular environment that affect cell physiology. Phosphorylates atf1 and mkp1. In conjunction with hal4, has a role in the cellular resistance to toxic cations such as Na(+), Li(+) and Ca(2+). Involved in resistance to arsenite, methylglyoxal and hydrogen peroxide. Involved in induction of thermotolerance in mRNA export, as well as in vacuolar fission.</text>
</comment>
<comment type="catalytic activity">
    <reaction evidence="2">
        <text>L-seryl-[protein] + ATP = O-phospho-L-seryl-[protein] + ADP + H(+)</text>
        <dbReference type="Rhea" id="RHEA:17989"/>
        <dbReference type="Rhea" id="RHEA-COMP:9863"/>
        <dbReference type="Rhea" id="RHEA-COMP:11604"/>
        <dbReference type="ChEBI" id="CHEBI:15378"/>
        <dbReference type="ChEBI" id="CHEBI:29999"/>
        <dbReference type="ChEBI" id="CHEBI:30616"/>
        <dbReference type="ChEBI" id="CHEBI:83421"/>
        <dbReference type="ChEBI" id="CHEBI:456216"/>
        <dbReference type="EC" id="2.7.11.24"/>
    </reaction>
    <physiologicalReaction direction="left-to-right" evidence="2">
        <dbReference type="Rhea" id="RHEA:17990"/>
    </physiologicalReaction>
</comment>
<comment type="catalytic activity">
    <reaction evidence="2">
        <text>L-threonyl-[protein] + ATP = O-phospho-L-threonyl-[protein] + ADP + H(+)</text>
        <dbReference type="Rhea" id="RHEA:46608"/>
        <dbReference type="Rhea" id="RHEA-COMP:11060"/>
        <dbReference type="Rhea" id="RHEA-COMP:11605"/>
        <dbReference type="ChEBI" id="CHEBI:15378"/>
        <dbReference type="ChEBI" id="CHEBI:30013"/>
        <dbReference type="ChEBI" id="CHEBI:30616"/>
        <dbReference type="ChEBI" id="CHEBI:61977"/>
        <dbReference type="ChEBI" id="CHEBI:456216"/>
        <dbReference type="EC" id="2.7.11.24"/>
    </reaction>
    <physiologicalReaction direction="left-to-right" evidence="2">
        <dbReference type="Rhea" id="RHEA:46609"/>
    </physiologicalReaction>
</comment>
<comment type="cofactor">
    <cofactor evidence="3">
        <name>Mg(2+)</name>
        <dbReference type="ChEBI" id="CHEBI:18420"/>
    </cofactor>
</comment>
<comment type="activity regulation">
    <text evidence="7 9 15 21 24 26">Activated by the MAPK kinase wisl, and negatively regulated by pypl and pyp2 tyrosine phosphatases.</text>
</comment>
<comment type="subunit">
    <text evidence="6 8 9 11">Interacts with cdc37, cmk2, hal4, sin1 and srk1.</text>
</comment>
<comment type="interaction">
    <interactant intactId="EBI-3648525">
        <id>Q09892</id>
    </interactant>
    <interactant intactId="EBI-3861527">
        <id>P52890</id>
        <label>atf1</label>
    </interactant>
    <organismsDiffer>false</organismsDiffer>
    <experiments>2</experiments>
</comment>
<comment type="interaction">
    <interactant intactId="EBI-3648525">
        <id>Q09892</id>
    </interactant>
    <interactant intactId="EBI-7593590">
        <id>O14156</id>
        <label>ptc4</label>
    </interactant>
    <organismsDiffer>false</organismsDiffer>
    <experiments>4</experiments>
</comment>
<comment type="interaction">
    <interactant intactId="EBI-3648525">
        <id>Q09892</id>
    </interactant>
    <interactant intactId="EBI-16823313">
        <id>O74802</id>
        <label>snr1</label>
    </interactant>
    <organismsDiffer>false</organismsDiffer>
    <experiments>3</experiments>
</comment>
<comment type="interaction">
    <interactant intactId="EBI-3648525">
        <id>Q09892</id>
    </interactant>
    <interactant intactId="EBI-3648527">
        <id>O94547</id>
        <label>srk1</label>
    </interactant>
    <organismsDiffer>false</organismsDiffer>
    <experiments>3</experiments>
</comment>
<comment type="subcellular location">
    <subcellularLocation>
        <location>Cytoplasm</location>
    </subcellularLocation>
    <subcellularLocation>
        <location>Nucleus</location>
    </subcellularLocation>
    <text>Predominantly cytoplasmic in unstressed cells but rapidly concentrates within the nucleus in response to hyperosmotic conditions and phosphorylation.</text>
</comment>
<comment type="domain">
    <text>The TXY motif contains the threonine and tyrosine residues whose phosphorylation activates the MAP kinases.</text>
</comment>
<comment type="PTM">
    <text evidence="1 6 12 13 15 19 21 24 26 27">Dually phosphorylated on Thr-171 and Tyr-173, which activates the enzyme (By similarity). Phosphorylated by wis1 in response to osmotic stress, nutrient limitation, hydrogen peroxide and arsenite. Dephosphorylated by pyp1 and pyp2.</text>
</comment>
<comment type="disruption phenotype">
    <text evidence="20">Sensitive to methyl methanesulfonate (MMS, causes DNA breaks), hydroxyurea (HU, ribonucleotide reductase inhibitor), thiabendazole (TBZ), sirolimus (TORC1 inhibitor), and cold.</text>
</comment>
<comment type="similarity">
    <text evidence="4">Belongs to the protein kinase superfamily. Ser/Thr protein kinase family. MAP kinase subfamily. HOG1 sub-subfamily.</text>
</comment>
<organism>
    <name type="scientific">Schizosaccharomyces pombe (strain 972 / ATCC 24843)</name>
    <name type="common">Fission yeast</name>
    <dbReference type="NCBI Taxonomy" id="284812"/>
    <lineage>
        <taxon>Eukaryota</taxon>
        <taxon>Fungi</taxon>
        <taxon>Dikarya</taxon>
        <taxon>Ascomycota</taxon>
        <taxon>Taphrinomycotina</taxon>
        <taxon>Schizosaccharomycetes</taxon>
        <taxon>Schizosaccharomycetales</taxon>
        <taxon>Schizosaccharomycetaceae</taxon>
        <taxon>Schizosaccharomyces</taxon>
    </lineage>
</organism>
<reference key="1">
    <citation type="journal article" date="1995" name="Genes Dev.">
        <title>Pyp1 and Pyp2 PTPases dephosphorylate an osmosensing MAP kinase controlling cell size at division in fission yeast.</title>
        <authorList>
            <person name="Millar J.B.A."/>
            <person name="Buck V."/>
            <person name="Wilkinson M.G."/>
        </authorList>
    </citation>
    <scope>NUCLEOTIDE SEQUENCE [GENOMIC DNA]</scope>
    <scope>FUNCTION</scope>
</reference>
<reference key="2">
    <citation type="journal article" date="1995" name="Nature">
        <title>Cell-cycle control linked to extracellular environment by MAP kinase pathway in fission yeast.</title>
        <authorList>
            <person name="Shiozaki K."/>
            <person name="Russell P."/>
        </authorList>
    </citation>
    <scope>NUCLEOTIDE SEQUENCE [MRNA]</scope>
    <scope>FUNCTION</scope>
    <scope>PHOSPHORYLATION</scope>
    <scope>ACTIVITY REGULATION</scope>
</reference>
<reference key="3">
    <citation type="journal article" date="1996" name="FEBS Lett.">
        <title>Stress signal, mediated by a Hog1-like MAP kinase, controls sexual development in fission yeast.</title>
        <authorList>
            <person name="Kato T. Jr."/>
            <person name="Okazaki K."/>
            <person name="Murakami H."/>
            <person name="Stettler S."/>
            <person name="Fantes P.A."/>
            <person name="Okayama H."/>
        </authorList>
    </citation>
    <scope>NUCLEOTIDE SEQUENCE [GENOMIC DNA]</scope>
    <scope>FUNCTION</scope>
</reference>
<reference key="4">
    <citation type="journal article" date="2002" name="Nature">
        <title>The genome sequence of Schizosaccharomyces pombe.</title>
        <authorList>
            <person name="Wood V."/>
            <person name="Gwilliam R."/>
            <person name="Rajandream M.A."/>
            <person name="Lyne M.H."/>
            <person name="Lyne R."/>
            <person name="Stewart A."/>
            <person name="Sgouros J.G."/>
            <person name="Peat N."/>
            <person name="Hayles J."/>
            <person name="Baker S.G."/>
            <person name="Basham D."/>
            <person name="Bowman S."/>
            <person name="Brooks K."/>
            <person name="Brown D."/>
            <person name="Brown S."/>
            <person name="Chillingworth T."/>
            <person name="Churcher C.M."/>
            <person name="Collins M."/>
            <person name="Connor R."/>
            <person name="Cronin A."/>
            <person name="Davis P."/>
            <person name="Feltwell T."/>
            <person name="Fraser A."/>
            <person name="Gentles S."/>
            <person name="Goble A."/>
            <person name="Hamlin N."/>
            <person name="Harris D.E."/>
            <person name="Hidalgo J."/>
            <person name="Hodgson G."/>
            <person name="Holroyd S."/>
            <person name="Hornsby T."/>
            <person name="Howarth S."/>
            <person name="Huckle E.J."/>
            <person name="Hunt S."/>
            <person name="Jagels K."/>
            <person name="James K.D."/>
            <person name="Jones L."/>
            <person name="Jones M."/>
            <person name="Leather S."/>
            <person name="McDonald S."/>
            <person name="McLean J."/>
            <person name="Mooney P."/>
            <person name="Moule S."/>
            <person name="Mungall K.L."/>
            <person name="Murphy L.D."/>
            <person name="Niblett D."/>
            <person name="Odell C."/>
            <person name="Oliver K."/>
            <person name="O'Neil S."/>
            <person name="Pearson D."/>
            <person name="Quail M.A."/>
            <person name="Rabbinowitsch E."/>
            <person name="Rutherford K.M."/>
            <person name="Rutter S."/>
            <person name="Saunders D."/>
            <person name="Seeger K."/>
            <person name="Sharp S."/>
            <person name="Skelton J."/>
            <person name="Simmonds M.N."/>
            <person name="Squares R."/>
            <person name="Squares S."/>
            <person name="Stevens K."/>
            <person name="Taylor K."/>
            <person name="Taylor R.G."/>
            <person name="Tivey A."/>
            <person name="Walsh S.V."/>
            <person name="Warren T."/>
            <person name="Whitehead S."/>
            <person name="Woodward J.R."/>
            <person name="Volckaert G."/>
            <person name="Aert R."/>
            <person name="Robben J."/>
            <person name="Grymonprez B."/>
            <person name="Weltjens I."/>
            <person name="Vanstreels E."/>
            <person name="Rieger M."/>
            <person name="Schaefer M."/>
            <person name="Mueller-Auer S."/>
            <person name="Gabel C."/>
            <person name="Fuchs M."/>
            <person name="Duesterhoeft A."/>
            <person name="Fritzc C."/>
            <person name="Holzer E."/>
            <person name="Moestl D."/>
            <person name="Hilbert H."/>
            <person name="Borzym K."/>
            <person name="Langer I."/>
            <person name="Beck A."/>
            <person name="Lehrach H."/>
            <person name="Reinhardt R."/>
            <person name="Pohl T.M."/>
            <person name="Eger P."/>
            <person name="Zimmermann W."/>
            <person name="Wedler H."/>
            <person name="Wambutt R."/>
            <person name="Purnelle B."/>
            <person name="Goffeau A."/>
            <person name="Cadieu E."/>
            <person name="Dreano S."/>
            <person name="Gloux S."/>
            <person name="Lelaure V."/>
            <person name="Mottier S."/>
            <person name="Galibert F."/>
            <person name="Aves S.J."/>
            <person name="Xiang Z."/>
            <person name="Hunt C."/>
            <person name="Moore K."/>
            <person name="Hurst S.M."/>
            <person name="Lucas M."/>
            <person name="Rochet M."/>
            <person name="Gaillardin C."/>
            <person name="Tallada V.A."/>
            <person name="Garzon A."/>
            <person name="Thode G."/>
            <person name="Daga R.R."/>
            <person name="Cruzado L."/>
            <person name="Jimenez J."/>
            <person name="Sanchez M."/>
            <person name="del Rey F."/>
            <person name="Benito J."/>
            <person name="Dominguez A."/>
            <person name="Revuelta J.L."/>
            <person name="Moreno S."/>
            <person name="Armstrong J."/>
            <person name="Forsburg S.L."/>
            <person name="Cerutti L."/>
            <person name="Lowe T."/>
            <person name="McCombie W.R."/>
            <person name="Paulsen I."/>
            <person name="Potashkin J."/>
            <person name="Shpakovski G.V."/>
            <person name="Ussery D."/>
            <person name="Barrell B.G."/>
            <person name="Nurse P."/>
        </authorList>
    </citation>
    <scope>NUCLEOTIDE SEQUENCE [LARGE SCALE GENOMIC DNA]</scope>
    <source>
        <strain>972 / ATCC 24843</strain>
    </source>
</reference>
<reference key="5">
    <citation type="journal article" date="1996" name="Genes Dev.">
        <title>Conjugation, meiosis, and the osmotic stress response are regulated by Spc1 kinase through Atf1 transcription factor in fission yeast.</title>
        <authorList>
            <person name="Shiozaki K."/>
            <person name="Russell P."/>
        </authorList>
    </citation>
    <scope>FUNCTION</scope>
    <source>
        <strain>972 / ATCC 24843</strain>
    </source>
</reference>
<reference key="6">
    <citation type="journal article" date="1996" name="Mol. Cell. Biol.">
        <title>Activation and regulation of the Spc1 stress-activated protein kinase in Schizosaccharomyces pombe.</title>
        <authorList>
            <person name="Degols G."/>
            <person name="Shiozaki K."/>
            <person name="Russell P."/>
        </authorList>
    </citation>
    <scope>ACTIVITY REGULATION</scope>
    <scope>PHOSPHORYLATION</scope>
</reference>
<reference key="7">
    <citation type="journal article" date="1997" name="Methods Enzymol.">
        <title>Stress-activated protein kinase pathway in cell cycle control of fission yeast.</title>
        <authorList>
            <person name="Shiozaki K."/>
            <person name="Russell P."/>
        </authorList>
    </citation>
    <scope>SUBCELLULAR LOCATION</scope>
</reference>
<reference key="8">
    <citation type="journal article" date="1997" name="Mol. Biol. Cell">
        <title>Mcs4 mitotic catastrophe suppressor regulates the fission yeast cell cycle through the Wik1-Wis1-Spc1 kinase cascade.</title>
        <authorList>
            <person name="Shiozaki K."/>
            <person name="Shiozaki M."/>
            <person name="Russell P."/>
        </authorList>
    </citation>
    <scope>ACTIVITY REGULATION</scope>
    <scope>PHOSPHORYLATION</scope>
</reference>
<reference key="9">
    <citation type="journal article" date="1998" name="Curr. Biol.">
        <title>Regulated vacuole fusion and fission in Schizosaccharomyces pombe: an osmotic response dependent on MAP kinases.</title>
        <authorList>
            <person name="Bone N."/>
            <person name="Millar J.B.A."/>
            <person name="Toda T."/>
            <person name="Armstrong J."/>
        </authorList>
    </citation>
    <scope>FUNCTION</scope>
    <scope>PHOSPHORYLATION</scope>
</reference>
<reference key="10">
    <citation type="journal article" date="1998" name="Genes Dev.">
        <title>Regulation of the fission yeast transcription factor Pap1 by oxidative stress: requirement for the nuclear export factor Crm1 (Exportin) and the stress-activated MAP kinase Sty1/Spc1.</title>
        <authorList>
            <person name="Toone W.M."/>
            <person name="Kuge S."/>
            <person name="Samuels M."/>
            <person name="Morgan B.A."/>
            <person name="Toda T."/>
            <person name="Jones N."/>
        </authorList>
    </citation>
    <scope>FUNCTION</scope>
</reference>
<reference key="11">
    <citation type="journal article" date="1998" name="Genes Dev.">
        <title>Phosphorylation and association with the transcription factor Atf1 regulate localization of Spc1/Sty1 stress-activated kinase in fission yeast.</title>
        <authorList>
            <person name="Gaits F."/>
            <person name="Degols G."/>
            <person name="Shiozaki K."/>
            <person name="Russell P."/>
        </authorList>
    </citation>
    <scope>SUBCELLULAR LOCATION</scope>
</reference>
<reference key="12">
    <citation type="journal article" date="2002" name="J. Biol. Chem.">
        <title>The Srk1 protein kinase is a target for the Sty1 stress-activated MAPK in fission yeast.</title>
        <authorList>
            <person name="Smith D.A."/>
            <person name="Toone W.M."/>
            <person name="Chen D."/>
            <person name="Baehler J."/>
            <person name="Jones N."/>
            <person name="Morgan B.A."/>
            <person name="Quinn J."/>
        </authorList>
    </citation>
    <scope>FUNCTION</scope>
    <scope>SUBCELLULAR LOCATION</scope>
    <scope>PHOSPHORYLATION</scope>
    <scope>INTERACTION WITH SRK1</scope>
</reference>
<reference key="13">
    <citation type="journal article" date="2002" name="Mol. Biol. Cell">
        <title>Cytoplasmic localization of Wis1 MAPKK by nuclear export signal is important for nuclear targeting of Spc1/Sty1 MAPK in fission yeast.</title>
        <authorList>
            <person name="Nguyen A.N."/>
            <person name="Ikner A.D."/>
            <person name="Shiozaki M."/>
            <person name="Warren S.M."/>
            <person name="Shiozaki K."/>
        </authorList>
    </citation>
    <scope>ACTIVITY REGULATION</scope>
    <scope>SUBCELLULAR LOCATION</scope>
</reference>
<reference key="14">
    <citation type="journal article" date="2003" name="Mol. Cell. Biol.">
        <title>Identification of cdc37 as a novel regulator of the stress-responsive mitogen-activated protein kinase.</title>
        <authorList>
            <person name="Tatebe H."/>
            <person name="Shiozaki K."/>
        </authorList>
    </citation>
    <scope>INTERACTION WITH CDC37</scope>
    <scope>ACTIVITY REGULATION</scope>
</reference>
<reference key="15">
    <citation type="journal article" date="2003" name="Mol. Genet. Genomics">
        <title>Mkp1 and Mkp2, two MAPKAP-kinase homologues in Schizosaccharomyces pombe, interact with the MAP kinase Sty1.</title>
        <authorList>
            <person name="Asp E."/>
            <person name="Sunnerhagen P."/>
        </authorList>
    </citation>
    <scope>FUNCTION</scope>
    <scope>INTERACTION WITH CMK2 AND SRK1</scope>
</reference>
<reference key="16">
    <citation type="journal article" date="2005" name="Cell Struct. Funct.">
        <title>Hsp16p is required for thermotolerance in nuclear mRNA export in fission yeast Schizosaccharomyces pombe.</title>
        <authorList>
            <person name="Yoshida J."/>
            <person name="Tani T."/>
        </authorList>
    </citation>
    <scope>FUNCTION</scope>
</reference>
<reference key="17">
    <citation type="journal article" date="2005" name="Eukaryot. Cell">
        <title>Distinct signaling pathways respond to arsenite and reactive oxygen species in Schizosaccharomyces pombe.</title>
        <authorList>
            <person name="Rodriguez-Gabriel M.A."/>
            <person name="Russell P."/>
        </authorList>
    </citation>
    <scope>FUNCTION</scope>
    <scope>PHOSPHORYLATION</scope>
</reference>
<reference key="18">
    <citation type="journal article" date="2005" name="Eukaryot. Cell">
        <title>Stress-activated protein kinase pathway functions to support protein synthesis and translational adaptation in response to environmental stress in fission yeast.</title>
        <authorList>
            <person name="Dunand-Sauthier I."/>
            <person name="Walker C.A."/>
            <person name="Narasimhan J."/>
            <person name="Pearce A.K."/>
            <person name="Wek R.C."/>
            <person name="Humphrey T.C."/>
        </authorList>
    </citation>
    <scope>FUNCTION</scope>
</reference>
<reference key="19">
    <citation type="journal article" date="2005" name="J. Biol. Chem.">
        <title>The glycolytic metabolite methylglyoxal activates Pap1 and Sty1 stress responses in Schizosaccharomyces pombe.</title>
        <authorList>
            <person name="Zuin A."/>
            <person name="Vivancos A.P."/>
            <person name="Sanso M."/>
            <person name="Takatsume Y."/>
            <person name="Ayte J."/>
            <person name="Inoue Y."/>
            <person name="Hidalgo E."/>
        </authorList>
    </citation>
    <scope>FUNCTION</scope>
    <scope>SUBCELLULAR LOCATION</scope>
    <scope>PHOSPHORYLATION</scope>
</reference>
<reference key="20">
    <citation type="journal article" date="2005" name="Mol. Cell. Biol.">
        <title>Response of fission yeast to toxic cations involves cooperative action of the stress-activated protein kinase Spc1/Sty1 and the Hal4 protein kinase.</title>
        <authorList>
            <person name="Wang L.-Y."/>
            <person name="Shimada K."/>
            <person name="Morishita M."/>
            <person name="Shiozaki K."/>
        </authorList>
    </citation>
    <scope>FUNCTION</scope>
    <scope>INTERACTION WITH HAL4</scope>
</reference>
<reference key="21">
    <citation type="journal article" date="2006" name="FEBS Lett.">
        <title>The fission yeast stress MAPK cascade regulates the pmp3+ gene that encodes a highly conserved plasma membrane protein.</title>
        <authorList>
            <person name="Wang L.-Y."/>
            <person name="Shiozaki K."/>
        </authorList>
    </citation>
    <scope>FUNCTION</scope>
</reference>
<reference key="22">
    <citation type="journal article" date="2006" name="J. Biol. Chem.">
        <title>Methylglyoxal as a signal initiator for activation of the stress-activated protein kinase cascade in the fission yeast Schizosaccharomyces pombe.</title>
        <authorList>
            <person name="Takatsume Y."/>
            <person name="Izawa S."/>
            <person name="Inoue Y."/>
        </authorList>
    </citation>
    <scope>PHOSPHORYLATION</scope>
    <scope>ACTIVITY REGULATION</scope>
</reference>
<reference key="23">
    <citation type="journal article" date="2006" name="Nat. Biotechnol.">
        <title>ORFeome cloning and global analysis of protein localization in the fission yeast Schizosaccharomyces pombe.</title>
        <authorList>
            <person name="Matsuyama A."/>
            <person name="Arai R."/>
            <person name="Yashiroda Y."/>
            <person name="Shirai A."/>
            <person name="Kamata A."/>
            <person name="Sekido S."/>
            <person name="Kobayashi Y."/>
            <person name="Hashimoto A."/>
            <person name="Hamamoto M."/>
            <person name="Hiraoka Y."/>
            <person name="Horinouchi S."/>
            <person name="Yoshida M."/>
        </authorList>
    </citation>
    <scope>SUBCELLULAR LOCATION [LARGE SCALE ANALYSIS]</scope>
</reference>
<reference key="24">
    <citation type="journal article" date="2007" name="J. Biol. Chem.">
        <title>Regulation of Schizosaccharomyces pombe Atf1 protein levels by Sty1-mediated phosphorylation and heterodimerization with Pcr1.</title>
        <authorList>
            <person name="Lawrence C.L."/>
            <person name="Maekawa H."/>
            <person name="Worthington J.L."/>
            <person name="Reiter W."/>
            <person name="Wilkinson C.R.M."/>
            <person name="Jones N."/>
        </authorList>
    </citation>
    <scope>FUNCTION</scope>
</reference>
<reference key="25">
    <citation type="journal article" date="2007" name="J. Biol. Chem.">
        <title>Rad4TopBP1 associates with Srr2, an Spc1 MAPK-regulated protein, in response to environmental stress.</title>
        <authorList>
            <person name="Taricani L."/>
            <person name="Wang T.S.F."/>
        </authorList>
    </citation>
    <scope>FUNCTION</scope>
</reference>
<reference key="26">
    <citation type="journal article" date="2008" name="J. Proteome Res.">
        <title>Phosphoproteome analysis of fission yeast.</title>
        <authorList>
            <person name="Wilson-Grady J.T."/>
            <person name="Villen J."/>
            <person name="Gygi S.P."/>
        </authorList>
    </citation>
    <scope>PHOSPHORYLATION [LARGE SCALE ANALYSIS] AT THR-171; TYR-173; SER-175 AND THR-176</scope>
    <scope>IDENTIFICATION BY MASS SPECTROMETRY</scope>
</reference>
<reference key="27">
    <citation type="journal article" date="2017" name="Sci. Rep.">
        <title>Elp3 and Dph3 of Schizosaccharomyces pombe mediate cellular stress responses through tRNALysUUU modifications.</title>
        <authorList>
            <person name="Villahermosa D."/>
            <person name="Fleck O."/>
        </authorList>
    </citation>
    <scope>DISRUPTION PHENOTYPE</scope>
</reference>
<name>HOG1_SCHPO</name>
<protein>
    <recommendedName>
        <fullName>Mitogen-activated protein kinase sty1</fullName>
        <shortName>MAP kinase sty1</shortName>
        <ecNumber evidence="2">2.7.11.24</ecNumber>
    </recommendedName>
    <alternativeName>
        <fullName>MAP kinase spc1</fullName>
    </alternativeName>
</protein>
<gene>
    <name type="primary">sty1</name>
    <name type="synonym">hog1</name>
    <name type="synonym">phh1</name>
    <name type="synonym">spc1</name>
    <name type="ORF">SPAC24B11.06c</name>
</gene>
<dbReference type="EC" id="2.7.11.24" evidence="2"/>
<dbReference type="EMBL" id="X89262">
    <property type="protein sequence ID" value="CAA61537.1"/>
    <property type="molecule type" value="Genomic_DNA"/>
</dbReference>
<dbReference type="EMBL" id="U26739">
    <property type="protein sequence ID" value="AAA91020.1"/>
    <property type="molecule type" value="mRNA"/>
</dbReference>
<dbReference type="EMBL" id="CU329670">
    <property type="protein sequence ID" value="CAA91771.1"/>
    <property type="molecule type" value="Genomic_DNA"/>
</dbReference>
<dbReference type="PIR" id="S68675">
    <property type="entry name" value="S68675"/>
</dbReference>
<dbReference type="RefSeq" id="NP_592843.1">
    <property type="nucleotide sequence ID" value="NM_001018244.2"/>
</dbReference>
<dbReference type="SMR" id="Q09892"/>
<dbReference type="BioGRID" id="278148">
    <property type="interactions" value="317"/>
</dbReference>
<dbReference type="FunCoup" id="Q09892">
    <property type="interactions" value="583"/>
</dbReference>
<dbReference type="IntAct" id="Q09892">
    <property type="interactions" value="10"/>
</dbReference>
<dbReference type="MINT" id="Q09892"/>
<dbReference type="STRING" id="284812.Q09892"/>
<dbReference type="iPTMnet" id="Q09892"/>
<dbReference type="PaxDb" id="4896-SPAC24B11.06c.1"/>
<dbReference type="EnsemblFungi" id="SPAC24B11.06c.1">
    <property type="protein sequence ID" value="SPAC24B11.06c.1:pep"/>
    <property type="gene ID" value="SPAC24B11.06c"/>
</dbReference>
<dbReference type="GeneID" id="2541652"/>
<dbReference type="KEGG" id="spo:2541652"/>
<dbReference type="PomBase" id="SPAC24B11.06c">
    <property type="gene designation" value="sty1"/>
</dbReference>
<dbReference type="VEuPathDB" id="FungiDB:SPAC24B11.06c"/>
<dbReference type="eggNOG" id="KOG0660">
    <property type="taxonomic scope" value="Eukaryota"/>
</dbReference>
<dbReference type="HOGENOM" id="CLU_000288_181_1_1"/>
<dbReference type="InParanoid" id="Q09892"/>
<dbReference type="OMA" id="NRYTDLN"/>
<dbReference type="PhylomeDB" id="Q09892"/>
<dbReference type="BRENDA" id="2.7.11.24">
    <property type="organism ID" value="5613"/>
</dbReference>
<dbReference type="Reactome" id="R-SPO-193648">
    <property type="pathway name" value="NRAGE signals death through JNK"/>
</dbReference>
<dbReference type="Reactome" id="R-SPO-198753">
    <property type="pathway name" value="ERK/MAPK targets"/>
</dbReference>
<dbReference type="Reactome" id="R-SPO-2559580">
    <property type="pathway name" value="Oxidative Stress Induced Senescence"/>
</dbReference>
<dbReference type="Reactome" id="R-SPO-2871796">
    <property type="pathway name" value="FCERI mediated MAPK activation"/>
</dbReference>
<dbReference type="Reactome" id="R-SPO-418592">
    <property type="pathway name" value="ADP signalling through P2Y purinoceptor 1"/>
</dbReference>
<dbReference type="Reactome" id="R-SPO-432142">
    <property type="pathway name" value="Platelet sensitization by LDL"/>
</dbReference>
<dbReference type="Reactome" id="R-SPO-450321">
    <property type="pathway name" value="JNK (c-Jun kinases) phosphorylation and activation mediated by activated human TAK1"/>
</dbReference>
<dbReference type="Reactome" id="R-SPO-450341">
    <property type="pathway name" value="Activation of the AP-1 family of transcription factors"/>
</dbReference>
<dbReference type="Reactome" id="R-SPO-525793">
    <property type="pathway name" value="Myogenesis"/>
</dbReference>
<dbReference type="Reactome" id="R-SPO-5668599">
    <property type="pathway name" value="RHO GTPases Activate NADPH Oxidases"/>
</dbReference>
<dbReference type="Reactome" id="R-SPO-6798695">
    <property type="pathway name" value="Neutrophil degranulation"/>
</dbReference>
<dbReference type="Reactome" id="R-SPO-9007892">
    <property type="pathway name" value="Interleukin-38 signaling"/>
</dbReference>
<dbReference type="PRO" id="PR:Q09892"/>
<dbReference type="Proteomes" id="UP000002485">
    <property type="component" value="Chromosome I"/>
</dbReference>
<dbReference type="GO" id="GO:0000785">
    <property type="term" value="C:chromatin"/>
    <property type="evidence" value="ECO:0000314"/>
    <property type="project" value="PomBase"/>
</dbReference>
<dbReference type="GO" id="GO:0005737">
    <property type="term" value="C:cytoplasm"/>
    <property type="evidence" value="ECO:0000314"/>
    <property type="project" value="PomBase"/>
</dbReference>
<dbReference type="GO" id="GO:0010494">
    <property type="term" value="C:cytoplasmic stress granule"/>
    <property type="evidence" value="ECO:0000269"/>
    <property type="project" value="PomBase"/>
</dbReference>
<dbReference type="GO" id="GO:0005829">
    <property type="term" value="C:cytosol"/>
    <property type="evidence" value="ECO:0007005"/>
    <property type="project" value="PomBase"/>
</dbReference>
<dbReference type="GO" id="GO:0005758">
    <property type="term" value="C:mitochondrial intermembrane space"/>
    <property type="evidence" value="ECO:0000314"/>
    <property type="project" value="PomBase"/>
</dbReference>
<dbReference type="GO" id="GO:0005634">
    <property type="term" value="C:nucleus"/>
    <property type="evidence" value="ECO:0000314"/>
    <property type="project" value="PomBase"/>
</dbReference>
<dbReference type="GO" id="GO:0005524">
    <property type="term" value="F:ATP binding"/>
    <property type="evidence" value="ECO:0000255"/>
    <property type="project" value="PomBase"/>
</dbReference>
<dbReference type="GO" id="GO:0004707">
    <property type="term" value="F:MAP kinase activity"/>
    <property type="evidence" value="ECO:0000314"/>
    <property type="project" value="PomBase"/>
</dbReference>
<dbReference type="GO" id="GO:0106310">
    <property type="term" value="F:protein serine kinase activity"/>
    <property type="evidence" value="ECO:0007669"/>
    <property type="project" value="RHEA"/>
</dbReference>
<dbReference type="GO" id="GO:0004674">
    <property type="term" value="F:protein serine/threonine kinase activity"/>
    <property type="evidence" value="ECO:0000318"/>
    <property type="project" value="GO_Central"/>
</dbReference>
<dbReference type="GO" id="GO:0008353">
    <property type="term" value="F:RNA polymerase II CTD heptapeptide repeat kinase activity"/>
    <property type="evidence" value="ECO:0000314"/>
    <property type="project" value="PomBase"/>
</dbReference>
<dbReference type="GO" id="GO:0071470">
    <property type="term" value="P:cellular response to osmotic stress"/>
    <property type="evidence" value="ECO:0000315"/>
    <property type="project" value="PomBase"/>
</dbReference>
<dbReference type="GO" id="GO:0034599">
    <property type="term" value="P:cellular response to oxidative stress"/>
    <property type="evidence" value="ECO:0000315"/>
    <property type="project" value="PomBase"/>
</dbReference>
<dbReference type="GO" id="GO:1990625">
    <property type="term" value="P:negative regulation of cytoplasmic translational initiation in response to stress"/>
    <property type="evidence" value="ECO:0000353"/>
    <property type="project" value="PomBase"/>
</dbReference>
<dbReference type="GO" id="GO:0010972">
    <property type="term" value="P:negative regulation of G2/M transition of mitotic cell cycle"/>
    <property type="evidence" value="ECO:0000315"/>
    <property type="project" value="PomBase"/>
</dbReference>
<dbReference type="GO" id="GO:0010515">
    <property type="term" value="P:negative regulation of induction of conjugation with cellular fusion"/>
    <property type="evidence" value="ECO:0000315"/>
    <property type="project" value="PomBase"/>
</dbReference>
<dbReference type="GO" id="GO:0007231">
    <property type="term" value="P:osmosensory signaling pathway"/>
    <property type="evidence" value="ECO:0000318"/>
    <property type="project" value="GO_Central"/>
</dbReference>
<dbReference type="GO" id="GO:0038066">
    <property type="term" value="P:p38MAPK cascade"/>
    <property type="evidence" value="ECO:0000314"/>
    <property type="project" value="PomBase"/>
</dbReference>
<dbReference type="GO" id="GO:0010971">
    <property type="term" value="P:positive regulation of G2/M transition of mitotic cell cycle"/>
    <property type="evidence" value="ECO:0000315"/>
    <property type="project" value="PomBase"/>
</dbReference>
<dbReference type="GO" id="GO:0042307">
    <property type="term" value="P:positive regulation of protein import into nucleus"/>
    <property type="evidence" value="ECO:0000315"/>
    <property type="project" value="PomBase"/>
</dbReference>
<dbReference type="GO" id="GO:0090055">
    <property type="term" value="P:positive regulation of silent mating-type cassette heterochromatin formation"/>
    <property type="evidence" value="ECO:0000269"/>
    <property type="project" value="PomBase"/>
</dbReference>
<dbReference type="GO" id="GO:0045944">
    <property type="term" value="P:positive regulation of transcription by RNA polymerase II"/>
    <property type="evidence" value="ECO:0000315"/>
    <property type="project" value="PomBase"/>
</dbReference>
<dbReference type="GO" id="GO:1903715">
    <property type="term" value="P:regulation of aerobic respiration"/>
    <property type="evidence" value="ECO:0000315"/>
    <property type="project" value="PomBase"/>
</dbReference>
<dbReference type="GO" id="GO:0051445">
    <property type="term" value="P:regulation of meiotic cell cycle"/>
    <property type="evidence" value="ECO:0000315"/>
    <property type="project" value="PomBase"/>
</dbReference>
<dbReference type="GO" id="GO:1903499">
    <property type="term" value="P:regulation of mitotic actomyosin contractile ring assembly"/>
    <property type="evidence" value="ECO:0000269"/>
    <property type="project" value="PomBase"/>
</dbReference>
<dbReference type="GO" id="GO:0010520">
    <property type="term" value="P:regulation of reciprocal meiotic recombination"/>
    <property type="evidence" value="ECO:0000315"/>
    <property type="project" value="PomBase"/>
</dbReference>
<dbReference type="GO" id="GO:0051403">
    <property type="term" value="P:stress-activated MAPK cascade"/>
    <property type="evidence" value="ECO:0000318"/>
    <property type="project" value="GO_Central"/>
</dbReference>
<dbReference type="CDD" id="cd07856">
    <property type="entry name" value="STKc_Sty1_Hog1"/>
    <property type="match status" value="1"/>
</dbReference>
<dbReference type="FunFam" id="1.10.510.10:FF:000049">
    <property type="entry name" value="Mitogen-activated protein kinase"/>
    <property type="match status" value="1"/>
</dbReference>
<dbReference type="FunFam" id="3.30.200.20:FF:000050">
    <property type="entry name" value="Mitogen-activated protein kinase"/>
    <property type="match status" value="1"/>
</dbReference>
<dbReference type="Gene3D" id="3.30.200.20">
    <property type="entry name" value="Phosphorylase Kinase, domain 1"/>
    <property type="match status" value="1"/>
</dbReference>
<dbReference type="Gene3D" id="1.10.510.10">
    <property type="entry name" value="Transferase(Phosphotransferase) domain 1"/>
    <property type="match status" value="1"/>
</dbReference>
<dbReference type="InterPro" id="IPR011009">
    <property type="entry name" value="Kinase-like_dom_sf"/>
</dbReference>
<dbReference type="InterPro" id="IPR050117">
    <property type="entry name" value="MAP_kinase"/>
</dbReference>
<dbReference type="InterPro" id="IPR003527">
    <property type="entry name" value="MAP_kinase_CS"/>
</dbReference>
<dbReference type="InterPro" id="IPR008352">
    <property type="entry name" value="MAPK_p38-like"/>
</dbReference>
<dbReference type="InterPro" id="IPR038783">
    <property type="entry name" value="MAPK_Sty1/Hog1"/>
</dbReference>
<dbReference type="InterPro" id="IPR000719">
    <property type="entry name" value="Prot_kinase_dom"/>
</dbReference>
<dbReference type="InterPro" id="IPR017441">
    <property type="entry name" value="Protein_kinase_ATP_BS"/>
</dbReference>
<dbReference type="InterPro" id="IPR008271">
    <property type="entry name" value="Ser/Thr_kinase_AS"/>
</dbReference>
<dbReference type="PANTHER" id="PTHR24055">
    <property type="entry name" value="MITOGEN-ACTIVATED PROTEIN KINASE"/>
    <property type="match status" value="1"/>
</dbReference>
<dbReference type="Pfam" id="PF00069">
    <property type="entry name" value="Pkinase"/>
    <property type="match status" value="1"/>
</dbReference>
<dbReference type="PRINTS" id="PR01773">
    <property type="entry name" value="P38MAPKINASE"/>
</dbReference>
<dbReference type="SMART" id="SM00220">
    <property type="entry name" value="S_TKc"/>
    <property type="match status" value="1"/>
</dbReference>
<dbReference type="SUPFAM" id="SSF56112">
    <property type="entry name" value="Protein kinase-like (PK-like)"/>
    <property type="match status" value="1"/>
</dbReference>
<dbReference type="PROSITE" id="PS01351">
    <property type="entry name" value="MAPK"/>
    <property type="match status" value="1"/>
</dbReference>
<dbReference type="PROSITE" id="PS00107">
    <property type="entry name" value="PROTEIN_KINASE_ATP"/>
    <property type="match status" value="1"/>
</dbReference>
<dbReference type="PROSITE" id="PS50011">
    <property type="entry name" value="PROTEIN_KINASE_DOM"/>
    <property type="match status" value="1"/>
</dbReference>
<dbReference type="PROSITE" id="PS00108">
    <property type="entry name" value="PROTEIN_KINASE_ST"/>
    <property type="match status" value="1"/>
</dbReference>
<keyword id="KW-0010">Activator</keyword>
<keyword id="KW-0067">ATP-binding</keyword>
<keyword id="KW-0963">Cytoplasm</keyword>
<keyword id="KW-0418">Kinase</keyword>
<keyword id="KW-0547">Nucleotide-binding</keyword>
<keyword id="KW-0539">Nucleus</keyword>
<keyword id="KW-0597">Phosphoprotein</keyword>
<keyword id="KW-1185">Reference proteome</keyword>
<keyword id="KW-0723">Serine/threonine-protein kinase</keyword>
<keyword id="KW-0804">Transcription</keyword>
<keyword id="KW-0805">Transcription regulation</keyword>
<keyword id="KW-0808">Transferase</keyword>